<sequence length="1134" mass="124255">MMVEPNQLVQHLETFVDTNRSSSQQDDSLKAIASSLENDSLSITQLVREMEMYLTTTDNLVRARGILLLAEILDCLKAKPLNDTIVHTLVGFFSEKLADWRAMCGALVGCLALLKRKDVAGVVTDIDVQAMAKSMIQNVQVQALALHERKLAFELLECLLQQHSEAILTMGDLLVYAMCEAIDGEKDPQCLMIVFHLVELLAPLFPSPSGPLASDASDLFEVIGCYFPLHFTHTKDDEANIRREDLSRGLLLAISSTPFFEPYAIPLLLEKLSSSLPVAKVDSLKCLKDCALKYGVDRMKKHYGALWSALKDTFYSSTGTHLSFAIESLTSPGFEMNEIHRDAVSLLQRLVKQDISFLGFVVDDTRINTVFDTIYRYPQYKEMPDPSKLEVLVISQILSVSAKASVQSCNIIFEAIFFRLMNTLGIVEKTSTGDVVQNGNSTVSTRLYHGGLHLCIELLAASKDLILGFEECSPTSGCANSGCSMVKSFSVPLIQVFTSAVCRSNDDSVVDVYLGVKGLLTMGMFRGGSSPVSRTEFENILVTLTSIITAKSGKTVVWELALKALVCIGSFIDRYHESDKAMSYMSIVVDNLVSLACSSHCGLPYQMILEATSEVCSTGPKYVEKMVQGLEEAFCSSLSDFYVNGNFESIDNCSQLLKCLTNKLLPRVAEIDGLEQLLVHFAISMWKQIEFCGVFSCDFNGREFVEAAMTTMRQVVGIALVDSQNSIIQKAYSVVSSCTLPAMESIPLTFVALEGLQRDLSSRDELILSLFASVIIAASPSASIPDAKSLIHLLLVTLLKGYIPAAQALGSMVNKLGSGSGGTNTSRDCSLEEACAIIFHADFASGKKISSNGSAKIIVGSETTMSKICLGYCGSLDLQTRAITGLAWIGKGLLMRGNERVNEIALVLVECLKSNNCSGHALHPSAMKHAADAFSIIMSDSEVCLNRKFHAVIRPLYKQRCFSTIVPILESLIMNSQTSLSRTMLHVALAHVISNVPVTVILDNTKKLQPLILEGLSVLSLDSVEKETLFSLLLVLSGTLTDTKGQQSASDNAHIIIECLIKLTSYPHLMVVRETSIQCLVALLELPHRRIYPFRREVLQAIEKSLDDPKRKVREEAIRCRQAWASITSGSNIF</sequence>
<accession>Q0WVF8</accession>
<accession>Q9FI26</accession>
<protein>
    <recommendedName>
        <fullName evidence="4">MMS19 nucleotide excision repair protein homolog</fullName>
    </recommendedName>
    <alternativeName>
        <fullName evidence="3">MET18 homolog</fullName>
    </alternativeName>
    <alternativeName>
        <fullName evidence="4">MMS19-like protein</fullName>
    </alternativeName>
</protein>
<dbReference type="EMBL" id="AB017064">
    <property type="protein sequence ID" value="BAB11076.1"/>
    <property type="status" value="ALT_SEQ"/>
    <property type="molecule type" value="Genomic_DNA"/>
</dbReference>
<dbReference type="EMBL" id="AB023039">
    <property type="protein sequence ID" value="BAB11076.1"/>
    <property type="status" value="JOINED"/>
    <property type="molecule type" value="Genomic_DNA"/>
</dbReference>
<dbReference type="EMBL" id="CP002688">
    <property type="protein sequence ID" value="AED95621.1"/>
    <property type="molecule type" value="Genomic_DNA"/>
</dbReference>
<dbReference type="EMBL" id="CP002688">
    <property type="protein sequence ID" value="ANM69256.1"/>
    <property type="molecule type" value="Genomic_DNA"/>
</dbReference>
<dbReference type="EMBL" id="CP002688">
    <property type="protein sequence ID" value="ANM69257.1"/>
    <property type="molecule type" value="Genomic_DNA"/>
</dbReference>
<dbReference type="EMBL" id="AK226792">
    <property type="protein sequence ID" value="BAE98890.1"/>
    <property type="molecule type" value="mRNA"/>
</dbReference>
<dbReference type="RefSeq" id="NP_001318759.1">
    <property type="nucleotide sequence ID" value="NM_001344759.1"/>
</dbReference>
<dbReference type="RefSeq" id="NP_001330951.1">
    <property type="nucleotide sequence ID" value="NM_001344760.1"/>
</dbReference>
<dbReference type="RefSeq" id="NP_199623.2">
    <property type="nucleotide sequence ID" value="NM_124186.5"/>
</dbReference>
<dbReference type="SMR" id="Q0WVF8"/>
<dbReference type="FunCoup" id="Q0WVF8">
    <property type="interactions" value="4404"/>
</dbReference>
<dbReference type="STRING" id="3702.Q0WVF8"/>
<dbReference type="iPTMnet" id="Q0WVF8"/>
<dbReference type="PaxDb" id="3702-AT5G48120.1"/>
<dbReference type="ProteomicsDB" id="250752"/>
<dbReference type="EnsemblPlants" id="AT5G48120.1">
    <property type="protein sequence ID" value="AT5G48120.1"/>
    <property type="gene ID" value="AT5G48120"/>
</dbReference>
<dbReference type="EnsemblPlants" id="AT5G48120.2">
    <property type="protein sequence ID" value="AT5G48120.2"/>
    <property type="gene ID" value="AT5G48120"/>
</dbReference>
<dbReference type="EnsemblPlants" id="AT5G48120.3">
    <property type="protein sequence ID" value="AT5G48120.3"/>
    <property type="gene ID" value="AT5G48120"/>
</dbReference>
<dbReference type="GeneID" id="834864"/>
<dbReference type="Gramene" id="AT5G48120.1">
    <property type="protein sequence ID" value="AT5G48120.1"/>
    <property type="gene ID" value="AT5G48120"/>
</dbReference>
<dbReference type="Gramene" id="AT5G48120.2">
    <property type="protein sequence ID" value="AT5G48120.2"/>
    <property type="gene ID" value="AT5G48120"/>
</dbReference>
<dbReference type="Gramene" id="AT5G48120.3">
    <property type="protein sequence ID" value="AT5G48120.3"/>
    <property type="gene ID" value="AT5G48120"/>
</dbReference>
<dbReference type="KEGG" id="ath:AT5G48120"/>
<dbReference type="Araport" id="AT5G48120"/>
<dbReference type="TAIR" id="AT5G48120">
    <property type="gene designation" value="MET18"/>
</dbReference>
<dbReference type="eggNOG" id="KOG1967">
    <property type="taxonomic scope" value="Eukaryota"/>
</dbReference>
<dbReference type="HOGENOM" id="CLU_005943_0_0_1"/>
<dbReference type="InParanoid" id="Q0WVF8"/>
<dbReference type="OMA" id="FSFMPEF"/>
<dbReference type="PhylomeDB" id="Q0WVF8"/>
<dbReference type="PRO" id="PR:Q0WVF8"/>
<dbReference type="Proteomes" id="UP000006548">
    <property type="component" value="Chromosome 5"/>
</dbReference>
<dbReference type="ExpressionAtlas" id="Q0WVF8">
    <property type="expression patterns" value="baseline and differential"/>
</dbReference>
<dbReference type="GO" id="GO:0005737">
    <property type="term" value="C:cytoplasm"/>
    <property type="evidence" value="ECO:0007669"/>
    <property type="project" value="UniProtKB-SubCell"/>
</dbReference>
<dbReference type="GO" id="GO:0005634">
    <property type="term" value="C:nucleus"/>
    <property type="evidence" value="ECO:0007669"/>
    <property type="project" value="UniProtKB-SubCell"/>
</dbReference>
<dbReference type="GO" id="GO:0051604">
    <property type="term" value="P:protein maturation"/>
    <property type="evidence" value="ECO:0007669"/>
    <property type="project" value="InterPro"/>
</dbReference>
<dbReference type="FunFam" id="1.25.10.10:FF:000707">
    <property type="entry name" value="MMS19 nucleotide excision repair protein-like protein"/>
    <property type="match status" value="1"/>
</dbReference>
<dbReference type="Gene3D" id="1.25.10.10">
    <property type="entry name" value="Leucine-rich Repeat Variant"/>
    <property type="match status" value="2"/>
</dbReference>
<dbReference type="InterPro" id="IPR011989">
    <property type="entry name" value="ARM-like"/>
</dbReference>
<dbReference type="InterPro" id="IPR016024">
    <property type="entry name" value="ARM-type_fold"/>
</dbReference>
<dbReference type="InterPro" id="IPR039920">
    <property type="entry name" value="MMS19"/>
</dbReference>
<dbReference type="InterPro" id="IPR024687">
    <property type="entry name" value="MMS19_C"/>
</dbReference>
<dbReference type="InterPro" id="IPR029240">
    <property type="entry name" value="MMS19_N"/>
</dbReference>
<dbReference type="PANTHER" id="PTHR12891">
    <property type="entry name" value="DNA REPAIR/TRANSCRIPTION PROTEIN MET18/MMS19"/>
    <property type="match status" value="1"/>
</dbReference>
<dbReference type="PANTHER" id="PTHR12891:SF0">
    <property type="entry name" value="MMS19 NUCLEOTIDE EXCISION REPAIR PROTEIN HOMOLOG"/>
    <property type="match status" value="1"/>
</dbReference>
<dbReference type="Pfam" id="PF12460">
    <property type="entry name" value="MMS19_C"/>
    <property type="match status" value="1"/>
</dbReference>
<dbReference type="Pfam" id="PF14500">
    <property type="entry name" value="MMS19_N"/>
    <property type="match status" value="1"/>
</dbReference>
<dbReference type="SUPFAM" id="SSF48371">
    <property type="entry name" value="ARM repeat"/>
    <property type="match status" value="2"/>
</dbReference>
<reference key="1">
    <citation type="journal article" date="1999" name="DNA Res.">
        <title>Structural analysis of Arabidopsis thaliana chromosome 5. IX. Sequence features of the regions of 1,011,550 bp covered by seventeen P1 and TAC clones.</title>
        <authorList>
            <person name="Kaneko T."/>
            <person name="Katoh T."/>
            <person name="Sato S."/>
            <person name="Nakamura Y."/>
            <person name="Asamizu E."/>
            <person name="Kotani H."/>
            <person name="Miyajima N."/>
            <person name="Tabata S."/>
        </authorList>
    </citation>
    <scope>NUCLEOTIDE SEQUENCE [LARGE SCALE GENOMIC DNA]</scope>
    <source>
        <strain>cv. Columbia</strain>
    </source>
</reference>
<reference key="2">
    <citation type="journal article" date="2000" name="DNA Res.">
        <title>Structural analysis of Arabidopsis thaliana chromosome 5. X. Sequence features of the regions of 3,076,755 bp covered by sixty P1 and TAC clones.</title>
        <authorList>
            <person name="Sato S."/>
            <person name="Nakamura Y."/>
            <person name="Kaneko T."/>
            <person name="Katoh T."/>
            <person name="Asamizu E."/>
            <person name="Kotani H."/>
            <person name="Tabata S."/>
        </authorList>
    </citation>
    <scope>NUCLEOTIDE SEQUENCE [LARGE SCALE GENOMIC DNA]</scope>
    <source>
        <strain>cv. Columbia</strain>
    </source>
</reference>
<reference key="3">
    <citation type="journal article" date="2017" name="Plant J.">
        <title>Araport11: a complete reannotation of the Arabidopsis thaliana reference genome.</title>
        <authorList>
            <person name="Cheng C.Y."/>
            <person name="Krishnakumar V."/>
            <person name="Chan A.P."/>
            <person name="Thibaud-Nissen F."/>
            <person name="Schobel S."/>
            <person name="Town C.D."/>
        </authorList>
    </citation>
    <scope>GENOME REANNOTATION</scope>
    <source>
        <strain>cv. Columbia</strain>
    </source>
</reference>
<reference key="4">
    <citation type="submission" date="2006-07" db="EMBL/GenBank/DDBJ databases">
        <title>Large-scale analysis of RIKEN Arabidopsis full-length (RAFL) cDNAs.</title>
        <authorList>
            <person name="Totoki Y."/>
            <person name="Seki M."/>
            <person name="Ishida J."/>
            <person name="Nakajima M."/>
            <person name="Enju A."/>
            <person name="Kamiya A."/>
            <person name="Narusaka M."/>
            <person name="Shin-i T."/>
            <person name="Nakagawa M."/>
            <person name="Sakamoto N."/>
            <person name="Oishi K."/>
            <person name="Kohara Y."/>
            <person name="Kobayashi M."/>
            <person name="Toyoda A."/>
            <person name="Sakaki Y."/>
            <person name="Sakurai T."/>
            <person name="Iida K."/>
            <person name="Akiyama K."/>
            <person name="Satou M."/>
            <person name="Toyoda T."/>
            <person name="Konagaya A."/>
            <person name="Carninci P."/>
            <person name="Kawai J."/>
            <person name="Hayashizaki Y."/>
            <person name="Shinozaki K."/>
        </authorList>
    </citation>
    <scope>NUCLEOTIDE SEQUENCE [LARGE SCALE MRNA]</scope>
    <source>
        <strain>cv. Columbia</strain>
    </source>
</reference>
<reference key="5">
    <citation type="journal article" date="2012" name="Plant Cell">
        <title>The DUF59 family gene AE7 acts in the cytosolic iron-sulfur cluster assembly pathway to maintain nuclear genome integrity in Arabidopsis.</title>
        <authorList>
            <person name="Luo D."/>
            <person name="Bernard D.G."/>
            <person name="Balk J."/>
            <person name="Hai H."/>
            <person name="Cui X."/>
        </authorList>
    </citation>
    <scope>FUNCTION</scope>
    <scope>INTERACTION WITH AE7</scope>
    <scope>SUBCELLULAR LOCATION</scope>
    <scope>DISRUPTION PHENOTYPE</scope>
    <source>
        <strain>cv. Columbia</strain>
    </source>
</reference>
<feature type="chain" id="PRO_0000433516" description="MMS19 nucleotide excision repair protein homolog">
    <location>
        <begin position="1"/>
        <end position="1134"/>
    </location>
</feature>
<feature type="repeat" description="HEAT 1" evidence="1">
    <location>
        <begin position="959"/>
        <end position="998"/>
    </location>
</feature>
<feature type="repeat" description="HEAT 2" evidence="1">
    <location>
        <begin position="1002"/>
        <end position="1047"/>
    </location>
</feature>
<feature type="repeat" description="HEAT 3" evidence="1">
    <location>
        <begin position="1050"/>
        <end position="1089"/>
    </location>
</feature>
<feature type="repeat" description="HEAT 4" evidence="1">
    <location>
        <begin position="1092"/>
        <end position="1130"/>
    </location>
</feature>
<organism evidence="7">
    <name type="scientific">Arabidopsis thaliana</name>
    <name type="common">Mouse-ear cress</name>
    <dbReference type="NCBI Taxonomy" id="3702"/>
    <lineage>
        <taxon>Eukaryota</taxon>
        <taxon>Viridiplantae</taxon>
        <taxon>Streptophyta</taxon>
        <taxon>Embryophyta</taxon>
        <taxon>Tracheophyta</taxon>
        <taxon>Spermatophyta</taxon>
        <taxon>Magnoliopsida</taxon>
        <taxon>eudicotyledons</taxon>
        <taxon>Gunneridae</taxon>
        <taxon>Pentapetalae</taxon>
        <taxon>rosids</taxon>
        <taxon>malvids</taxon>
        <taxon>Brassicales</taxon>
        <taxon>Brassicaceae</taxon>
        <taxon>Camelineae</taxon>
        <taxon>Arabidopsis</taxon>
    </lineage>
</organism>
<comment type="function">
    <text evidence="2">May select specific target apoproteins to which a Fe-S cluster produced by the cytosolic iron-sulfur (Fe-S) protein assembly (CIA) pathway is transferred.</text>
</comment>
<comment type="subunit">
    <text evidence="2">Part of a complex composed of AE7, CIA1, MMS19 and NAR1. Interacts with AE7.</text>
</comment>
<comment type="subcellular location">
    <subcellularLocation>
        <location evidence="2">Nucleus</location>
    </subcellularLocation>
    <subcellularLocation>
        <location evidence="2">Cytoplasm</location>
    </subcellularLocation>
</comment>
<comment type="disruption phenotype">
    <text evidence="2">No visible phenotype.</text>
</comment>
<comment type="similarity">
    <text evidence="4">Belongs to the MET18/MMS19 family.</text>
</comment>
<comment type="sequence caution" evidence="4">
    <conflict type="erroneous gene model prediction">
        <sequence resource="EMBL-CDS" id="BAB11076"/>
    </conflict>
</comment>
<keyword id="KW-0963">Cytoplasm</keyword>
<keyword id="KW-0539">Nucleus</keyword>
<keyword id="KW-1185">Reference proteome</keyword>
<keyword id="KW-0677">Repeat</keyword>
<proteinExistence type="evidence at protein level"/>
<name>MMS19_ARATH</name>
<gene>
    <name evidence="4" type="primary">MMS19</name>
    <name evidence="3" type="synonym">MET18</name>
    <name evidence="5" type="ordered locus">At5g48120</name>
    <name evidence="6" type="ORF">MDN11.21</name>
</gene>
<evidence type="ECO:0000255" key="1"/>
<evidence type="ECO:0000269" key="2">
    <source>
    </source>
</evidence>
<evidence type="ECO:0000303" key="3">
    <source>
    </source>
</evidence>
<evidence type="ECO:0000305" key="4"/>
<evidence type="ECO:0000312" key="5">
    <source>
        <dbReference type="Araport" id="AT5G48120"/>
    </source>
</evidence>
<evidence type="ECO:0000312" key="6">
    <source>
        <dbReference type="EMBL" id="BAB11076.1"/>
    </source>
</evidence>
<evidence type="ECO:0000312" key="7">
    <source>
        <dbReference type="EMBL" id="BAE98890.1"/>
    </source>
</evidence>